<proteinExistence type="inferred from homology"/>
<accession>Q4IJT0</accession>
<accession>A0A0E0RUB3</accession>
<accession>V6R028</accession>
<organism>
    <name type="scientific">Gibberella zeae (strain ATCC MYA-4620 / CBS 123657 / FGSC 9075 / NRRL 31084 / PH-1)</name>
    <name type="common">Wheat head blight fungus</name>
    <name type="synonym">Fusarium graminearum</name>
    <dbReference type="NCBI Taxonomy" id="229533"/>
    <lineage>
        <taxon>Eukaryota</taxon>
        <taxon>Fungi</taxon>
        <taxon>Dikarya</taxon>
        <taxon>Ascomycota</taxon>
        <taxon>Pezizomycotina</taxon>
        <taxon>Sordariomycetes</taxon>
        <taxon>Hypocreomycetidae</taxon>
        <taxon>Hypocreales</taxon>
        <taxon>Nectriaceae</taxon>
        <taxon>Fusarium</taxon>
    </lineage>
</organism>
<gene>
    <name type="primary">ALG8</name>
    <name type="ORF">FGRRES_02528</name>
    <name type="ORF">FGSG_02528</name>
</gene>
<sequence>MSEHYPTLAQTALVAAAFKILLFPAYKSTDFEVHRNWLAITNSLPLEKWYVEKTSEWTLDYPPFFAYFEWILAHVARLVDPLMVKVYNLDYDSWQTVYFQRTSVIVTELVLVWALQTFIETAPLKSRRAAQTVALSIILSPGLLIIDHIHFQYNGFMYGILVMSLVLARQNSELLSSGLIFAALLCFKHIYLYLAPAYFVYLLRAYCLSSKSIFRIRFLNSIKLGLGIGAIFGAAFGPFAAMDQIPQLLSRLFPFSRGLCHAYWAPNVWALYSFADRILIHVAPRLGWAVNKSALQSVTRGLVGDTAFAVLPEISPRTCFVLTLFFQVVPLIKLFFQPTWETFIGAVTLCGYSSFLFGWHVHEKAILLVIIPFSLIALRDRRHLGAFRPLVVAGYVSLFPLLFTPAEFPIKTIYTIVWLVVFLLAFGRLAPASNKPRIFLLDRFSTLYIAISIPLILYCSLLHHLIFGKAYEFIPLMFTSSYTAIGVVGSWVGYMVVYFTA</sequence>
<protein>
    <recommendedName>
        <fullName evidence="1">Dolichyl pyrophosphate Glc1Man9GlcNAc2 alpha-1,3-glucosyltransferase</fullName>
        <ecNumber evidence="1">2.4.1.265</ecNumber>
    </recommendedName>
    <alternativeName>
        <fullName>Asparagine-linked glycosylation protein 8</fullName>
    </alternativeName>
    <alternativeName>
        <fullName>Dol-P-Glc:Glc(1)Man(9)GlcNAc(2)-PP-dolichyl alpha-1,3-glucosyltransferase</fullName>
    </alternativeName>
    <alternativeName>
        <fullName>Dolichyl-P-Glc:Glc1Man9GlcNAc2-PP-dolichyl glucosyltransferase</fullName>
    </alternativeName>
</protein>
<keyword id="KW-0256">Endoplasmic reticulum</keyword>
<keyword id="KW-0328">Glycosyltransferase</keyword>
<keyword id="KW-0472">Membrane</keyword>
<keyword id="KW-1185">Reference proteome</keyword>
<keyword id="KW-0808">Transferase</keyword>
<keyword id="KW-0812">Transmembrane</keyword>
<keyword id="KW-1133">Transmembrane helix</keyword>
<evidence type="ECO:0000250" key="1">
    <source>
        <dbReference type="UniProtKB" id="P40351"/>
    </source>
</evidence>
<evidence type="ECO:0000255" key="2"/>
<evidence type="ECO:0000305" key="3"/>
<name>ALG8_GIBZE</name>
<comment type="function">
    <text evidence="1">Dolichyl pyrophosphate Glc1Man9GlcNAc2 alpha-1,3-glucosyltransferase that operates in the biosynthetic pathway of dolichol-linked oligosaccharides, the glycan precursors employed in protein asparagine (N)-glycosylation. The assembly of dolichol-linked oligosaccharides begins on the cytosolic side of the endoplasmic reticulum membrane and finishes in its lumen. The sequential addition of sugars to dolichol pyrophosphate produces dolichol-linked oligosaccharides containing fourteen sugars, including two GlcNAcs, nine mannoses and three glucoses. Once assembled, the oligosaccharide is transferred from the lipid to nascent proteins by oligosaccharyltransferases. In the lumen of the endoplasmic reticulum, adds the second glucose residue from dolichyl phosphate glucose (Dol-P-Glc) onto the lipid-linked oligosaccharide intermediate Glc(1)Man(9)GlcNAc(2)-PP-Dol to produce Glc(2)Man(9)GlcNAc(2)-PP-Dol.</text>
</comment>
<comment type="catalytic activity">
    <reaction evidence="1">
        <text>an alpha-D-Glc-(1-&gt;3)-alpha-D-Man-(1-&gt;2)-alpha-D-Man-(1-&gt;2)-alpha-D-Man-(1-&gt;3)-[alpha-D-Man-(1-&gt;2)-alpha-D-Man-(1-&gt;3)-[alpha-D-Man-(1-&gt;2)-alpha-D-Man-(1-&gt;6)]-alpha-D-Man-(1-&gt;6)]-beta-D-Man-(1-&gt;4)-beta-D-GlcNAc-(1-&gt;4)-alpha-D-GlcNAc-diphospho-di-trans,poly-cis-dolichol + a di-trans,poly-cis-dolichyl beta-D-glucosyl phosphate = an alpha-D-Glc-(1-&gt;3)-alpha-D-Glc-(1-&gt;3)-alpha-D-Man-(1-&gt;2)-alpha-D-Man-(1-&gt;2)-alpha-D-Man-(1-&gt;3)-[alpha-D-Man-(1-&gt;2)-alpha-D-Man-(1-&gt;3)-[alpha-D-Man-(1-&gt;2)-alpha-D-Man-(1-&gt;6)]-alpha-D-Man-(1-&gt;6)]-beta-D-Man-(1-&gt;4)-beta-D-GlcNAc-(1-&gt;4)-alpha-D-GlcNAc-diphospho-di-trans,poly-cis-dolichol + a di-trans,poly-cis-dolichyl phosphate + H(+)</text>
        <dbReference type="Rhea" id="RHEA:31307"/>
        <dbReference type="Rhea" id="RHEA-COMP:19498"/>
        <dbReference type="Rhea" id="RHEA-COMP:19502"/>
        <dbReference type="Rhea" id="RHEA-COMP:19521"/>
        <dbReference type="Rhea" id="RHEA-COMP:19522"/>
        <dbReference type="ChEBI" id="CHEBI:15378"/>
        <dbReference type="ChEBI" id="CHEBI:57525"/>
        <dbReference type="ChEBI" id="CHEBI:57683"/>
        <dbReference type="ChEBI" id="CHEBI:132521"/>
        <dbReference type="ChEBI" id="CHEBI:132522"/>
        <dbReference type="EC" id="2.4.1.265"/>
    </reaction>
    <physiologicalReaction direction="left-to-right" evidence="1">
        <dbReference type="Rhea" id="RHEA:31308"/>
    </physiologicalReaction>
</comment>
<comment type="pathway">
    <text evidence="1">Protein modification; protein glycosylation.</text>
</comment>
<comment type="subcellular location">
    <subcellularLocation>
        <location evidence="1">Endoplasmic reticulum membrane</location>
        <topology evidence="2">Multi-pass membrane protein</topology>
    </subcellularLocation>
</comment>
<comment type="similarity">
    <text evidence="3">Belongs to the ALG6/ALG8 glucosyltransferase family.</text>
</comment>
<feature type="chain" id="PRO_0000278334" description="Dolichyl pyrophosphate Glc1Man9GlcNAc2 alpha-1,3-glucosyltransferase">
    <location>
        <begin position="1"/>
        <end position="501"/>
    </location>
</feature>
<feature type="topological domain" description="Lumenal" evidence="2">
    <location>
        <begin position="1"/>
        <end position="4"/>
    </location>
</feature>
<feature type="transmembrane region" description="Helical" evidence="2">
    <location>
        <begin position="5"/>
        <end position="25"/>
    </location>
</feature>
<feature type="topological domain" description="Cytoplasmic" evidence="2">
    <location>
        <begin position="26"/>
        <end position="103"/>
    </location>
</feature>
<feature type="transmembrane region" description="Helical" evidence="2">
    <location>
        <begin position="104"/>
        <end position="124"/>
    </location>
</feature>
<feature type="topological domain" description="Lumenal" evidence="2">
    <location>
        <begin position="125"/>
        <end position="128"/>
    </location>
</feature>
<feature type="transmembrane region" description="Helical" evidence="2">
    <location>
        <begin position="129"/>
        <end position="149"/>
    </location>
</feature>
<feature type="topological domain" description="Cytoplasmic" evidence="2">
    <location>
        <begin position="150"/>
        <end position="179"/>
    </location>
</feature>
<feature type="transmembrane region" description="Helical" evidence="2">
    <location>
        <begin position="180"/>
        <end position="200"/>
    </location>
</feature>
<feature type="topological domain" description="Lumenal" evidence="2">
    <location>
        <begin position="201"/>
        <end position="221"/>
    </location>
</feature>
<feature type="transmembrane region" description="Helical" evidence="2">
    <location>
        <begin position="222"/>
        <end position="242"/>
    </location>
</feature>
<feature type="topological domain" description="Cytoplasmic" evidence="2">
    <location>
        <begin position="243"/>
        <end position="252"/>
    </location>
</feature>
<feature type="transmembrane region" description="Helical" evidence="2">
    <location>
        <begin position="253"/>
        <end position="275"/>
    </location>
</feature>
<feature type="topological domain" description="Lumenal" evidence="2">
    <location>
        <begin position="276"/>
        <end position="319"/>
    </location>
</feature>
<feature type="transmembrane region" description="Helical" evidence="2">
    <location>
        <begin position="320"/>
        <end position="340"/>
    </location>
</feature>
<feature type="topological domain" description="Cytoplasmic" evidence="2">
    <location>
        <begin position="341"/>
        <end position="355"/>
    </location>
</feature>
<feature type="transmembrane region" description="Helical" evidence="2">
    <location>
        <begin position="356"/>
        <end position="376"/>
    </location>
</feature>
<feature type="topological domain" description="Lumenal" evidence="2">
    <location>
        <begin position="377"/>
        <end position="383"/>
    </location>
</feature>
<feature type="transmembrane region" description="Helical" evidence="2">
    <location>
        <begin position="384"/>
        <end position="404"/>
    </location>
</feature>
<feature type="topological domain" description="Cytoplasmic" evidence="2">
    <location>
        <position position="405"/>
    </location>
</feature>
<feature type="transmembrane region" description="Helical" evidence="2">
    <location>
        <begin position="406"/>
        <end position="426"/>
    </location>
</feature>
<feature type="topological domain" description="Lumenal" evidence="2">
    <location>
        <begin position="427"/>
        <end position="446"/>
    </location>
</feature>
<feature type="transmembrane region" description="Helical" evidence="2">
    <location>
        <begin position="447"/>
        <end position="467"/>
    </location>
</feature>
<feature type="topological domain" description="Cytoplasmic" evidence="2">
    <location>
        <begin position="468"/>
        <end position="472"/>
    </location>
</feature>
<feature type="transmembrane region" description="Helical" evidence="2">
    <location>
        <begin position="473"/>
        <end position="493"/>
    </location>
</feature>
<feature type="topological domain" description="Lumenal" evidence="2">
    <location>
        <begin position="494"/>
        <end position="501"/>
    </location>
</feature>
<dbReference type="EC" id="2.4.1.265" evidence="1"/>
<dbReference type="EMBL" id="DS231663">
    <property type="protein sequence ID" value="ESU07978.1"/>
    <property type="molecule type" value="Genomic_DNA"/>
</dbReference>
<dbReference type="EMBL" id="HG970332">
    <property type="protein sequence ID" value="CEF74838.1"/>
    <property type="molecule type" value="Genomic_DNA"/>
</dbReference>
<dbReference type="RefSeq" id="XP_011318463.1">
    <property type="nucleotide sequence ID" value="XM_011320161.1"/>
</dbReference>
<dbReference type="SMR" id="Q4IJT0"/>
<dbReference type="FunCoup" id="Q4IJT0">
    <property type="interactions" value="793"/>
</dbReference>
<dbReference type="STRING" id="229533.Q4IJT0"/>
<dbReference type="GeneID" id="23549899"/>
<dbReference type="KEGG" id="fgr:FGSG_02528"/>
<dbReference type="VEuPathDB" id="FungiDB:FGRAMPH1_01G06067"/>
<dbReference type="eggNOG" id="KOG2576">
    <property type="taxonomic scope" value="Eukaryota"/>
</dbReference>
<dbReference type="HOGENOM" id="CLU_022045_1_1_1"/>
<dbReference type="InParanoid" id="Q4IJT0"/>
<dbReference type="OrthoDB" id="90923at110618"/>
<dbReference type="UniPathway" id="UPA00378"/>
<dbReference type="Proteomes" id="UP000070720">
    <property type="component" value="Chromosome 1"/>
</dbReference>
<dbReference type="GO" id="GO:0005789">
    <property type="term" value="C:endoplasmic reticulum membrane"/>
    <property type="evidence" value="ECO:0000250"/>
    <property type="project" value="UniProtKB"/>
</dbReference>
<dbReference type="GO" id="GO:0042283">
    <property type="term" value="F:dolichyl pyrophosphate Glc1Man9GlcNAc2 alpha-1,3-glucosyltransferase activity"/>
    <property type="evidence" value="ECO:0000250"/>
    <property type="project" value="UniProtKB"/>
</dbReference>
<dbReference type="GO" id="GO:0006488">
    <property type="term" value="P:dolichol-linked oligosaccharide biosynthetic process"/>
    <property type="evidence" value="ECO:0000250"/>
    <property type="project" value="UniProtKB"/>
</dbReference>
<dbReference type="GO" id="GO:0006487">
    <property type="term" value="P:protein N-linked glycosylation"/>
    <property type="evidence" value="ECO:0000250"/>
    <property type="project" value="UniProtKB"/>
</dbReference>
<dbReference type="InterPro" id="IPR004856">
    <property type="entry name" value="Glyco_trans_ALG6/ALG8"/>
</dbReference>
<dbReference type="PANTHER" id="PTHR12413">
    <property type="entry name" value="DOLICHYL GLYCOSYLTRANSFERASE"/>
    <property type="match status" value="1"/>
</dbReference>
<dbReference type="PANTHER" id="PTHR12413:SF2">
    <property type="entry name" value="DOLICHYL PYROPHOSPHATE GLC1MAN9GLCNAC2 ALPHA-1,3-GLUCOSYLTRANSFERASE-RELATED"/>
    <property type="match status" value="1"/>
</dbReference>
<dbReference type="Pfam" id="PF03155">
    <property type="entry name" value="Alg6_Alg8"/>
    <property type="match status" value="1"/>
</dbReference>
<reference key="1">
    <citation type="journal article" date="2007" name="Science">
        <title>The Fusarium graminearum genome reveals a link between localized polymorphism and pathogen specialization.</title>
        <authorList>
            <person name="Cuomo C.A."/>
            <person name="Gueldener U."/>
            <person name="Xu J.-R."/>
            <person name="Trail F."/>
            <person name="Turgeon B.G."/>
            <person name="Di Pietro A."/>
            <person name="Walton J.D."/>
            <person name="Ma L.-J."/>
            <person name="Baker S.E."/>
            <person name="Rep M."/>
            <person name="Adam G."/>
            <person name="Antoniw J."/>
            <person name="Baldwin T."/>
            <person name="Calvo S.E."/>
            <person name="Chang Y.-L."/>
            <person name="DeCaprio D."/>
            <person name="Gale L.R."/>
            <person name="Gnerre S."/>
            <person name="Goswami R.S."/>
            <person name="Hammond-Kosack K."/>
            <person name="Harris L.J."/>
            <person name="Hilburn K."/>
            <person name="Kennell J.C."/>
            <person name="Kroken S."/>
            <person name="Magnuson J.K."/>
            <person name="Mannhaupt G."/>
            <person name="Mauceli E.W."/>
            <person name="Mewes H.-W."/>
            <person name="Mitterbauer R."/>
            <person name="Muehlbauer G."/>
            <person name="Muensterkoetter M."/>
            <person name="Nelson D."/>
            <person name="O'Donnell K."/>
            <person name="Ouellet T."/>
            <person name="Qi W."/>
            <person name="Quesneville H."/>
            <person name="Roncero M.I.G."/>
            <person name="Seong K.-Y."/>
            <person name="Tetko I.V."/>
            <person name="Urban M."/>
            <person name="Waalwijk C."/>
            <person name="Ward T.J."/>
            <person name="Yao J."/>
            <person name="Birren B.W."/>
            <person name="Kistler H.C."/>
        </authorList>
    </citation>
    <scope>NUCLEOTIDE SEQUENCE [LARGE SCALE GENOMIC DNA]</scope>
    <source>
        <strain>ATCC MYA-4620 / CBS 123657 / FGSC 9075 / NRRL 31084 / PH-1</strain>
    </source>
</reference>
<reference key="2">
    <citation type="journal article" date="2010" name="Nature">
        <title>Comparative genomics reveals mobile pathogenicity chromosomes in Fusarium.</title>
        <authorList>
            <person name="Ma L.-J."/>
            <person name="van der Does H.C."/>
            <person name="Borkovich K.A."/>
            <person name="Coleman J.J."/>
            <person name="Daboussi M.-J."/>
            <person name="Di Pietro A."/>
            <person name="Dufresne M."/>
            <person name="Freitag M."/>
            <person name="Grabherr M."/>
            <person name="Henrissat B."/>
            <person name="Houterman P.M."/>
            <person name="Kang S."/>
            <person name="Shim W.-B."/>
            <person name="Woloshuk C."/>
            <person name="Xie X."/>
            <person name="Xu J.-R."/>
            <person name="Antoniw J."/>
            <person name="Baker S.E."/>
            <person name="Bluhm B.H."/>
            <person name="Breakspear A."/>
            <person name="Brown D.W."/>
            <person name="Butchko R.A.E."/>
            <person name="Chapman S."/>
            <person name="Coulson R."/>
            <person name="Coutinho P.M."/>
            <person name="Danchin E.G.J."/>
            <person name="Diener A."/>
            <person name="Gale L.R."/>
            <person name="Gardiner D.M."/>
            <person name="Goff S."/>
            <person name="Hammond-Kosack K.E."/>
            <person name="Hilburn K."/>
            <person name="Hua-Van A."/>
            <person name="Jonkers W."/>
            <person name="Kazan K."/>
            <person name="Kodira C.D."/>
            <person name="Koehrsen M."/>
            <person name="Kumar L."/>
            <person name="Lee Y.-H."/>
            <person name="Li L."/>
            <person name="Manners J.M."/>
            <person name="Miranda-Saavedra D."/>
            <person name="Mukherjee M."/>
            <person name="Park G."/>
            <person name="Park J."/>
            <person name="Park S.-Y."/>
            <person name="Proctor R.H."/>
            <person name="Regev A."/>
            <person name="Ruiz-Roldan M.C."/>
            <person name="Sain D."/>
            <person name="Sakthikumar S."/>
            <person name="Sykes S."/>
            <person name="Schwartz D.C."/>
            <person name="Turgeon B.G."/>
            <person name="Wapinski I."/>
            <person name="Yoder O."/>
            <person name="Young S."/>
            <person name="Zeng Q."/>
            <person name="Zhou S."/>
            <person name="Galagan J."/>
            <person name="Cuomo C.A."/>
            <person name="Kistler H.C."/>
            <person name="Rep M."/>
        </authorList>
    </citation>
    <scope>GENOME REANNOTATION</scope>
    <source>
        <strain>ATCC MYA-4620 / CBS 123657 / FGSC 9075 / NRRL 31084 / PH-1</strain>
    </source>
</reference>
<reference key="3">
    <citation type="journal article" date="2015" name="BMC Genomics">
        <title>The completed genome sequence of the pathogenic ascomycete fungus Fusarium graminearum.</title>
        <authorList>
            <person name="King R."/>
            <person name="Urban M."/>
            <person name="Hammond-Kosack M.C.U."/>
            <person name="Hassani-Pak K."/>
            <person name="Hammond-Kosack K.E."/>
        </authorList>
    </citation>
    <scope>NUCLEOTIDE SEQUENCE [LARGE SCALE GENOMIC DNA]</scope>
    <source>
        <strain>ATCC MYA-4620 / CBS 123657 / FGSC 9075 / NRRL 31084 / PH-1</strain>
    </source>
</reference>